<gene>
    <name evidence="1" type="primary">fmt</name>
    <name type="ordered locus">GWCH70_1063</name>
</gene>
<sequence>MIKVVFMGTPDFSVPILKQLIEDGYNIAAVVTQPDKPKGRKRELTPPPVKVEAEKHGIPVLQPTKIREKEQYEQVLAFKPDLIVTAAFGQILPKALLDAPKYGCINVHASLLPELRGGAPIHYAILQGKTKTGVTIMYMVEKLDAGDILTQVEVPITETDTVGTLHDKLSIAGAKLLSETIPQLVAGKLTPIKQDDEKATYAYNIKREQEKIDWTKPGEDIYNHIRGLHPWPVAYTTFAGNVWKVWWGEKVPAPKKAEPGTIIDIVQDGIVVATGNETAIKITELQPAGKKRMNAAQFLRGAGAHLTIGMKLGDEHES</sequence>
<comment type="function">
    <text evidence="1">Attaches a formyl group to the free amino group of methionyl-tRNA(fMet). The formyl group appears to play a dual role in the initiator identity of N-formylmethionyl-tRNA by promoting its recognition by IF2 and preventing the misappropriation of this tRNA by the elongation apparatus.</text>
</comment>
<comment type="catalytic activity">
    <reaction evidence="1">
        <text>L-methionyl-tRNA(fMet) + (6R)-10-formyltetrahydrofolate = N-formyl-L-methionyl-tRNA(fMet) + (6S)-5,6,7,8-tetrahydrofolate + H(+)</text>
        <dbReference type="Rhea" id="RHEA:24380"/>
        <dbReference type="Rhea" id="RHEA-COMP:9952"/>
        <dbReference type="Rhea" id="RHEA-COMP:9953"/>
        <dbReference type="ChEBI" id="CHEBI:15378"/>
        <dbReference type="ChEBI" id="CHEBI:57453"/>
        <dbReference type="ChEBI" id="CHEBI:78530"/>
        <dbReference type="ChEBI" id="CHEBI:78844"/>
        <dbReference type="ChEBI" id="CHEBI:195366"/>
        <dbReference type="EC" id="2.1.2.9"/>
    </reaction>
</comment>
<comment type="similarity">
    <text evidence="1">Belongs to the Fmt family.</text>
</comment>
<dbReference type="EC" id="2.1.2.9" evidence="1"/>
<dbReference type="EMBL" id="CP001638">
    <property type="protein sequence ID" value="ACS23923.1"/>
    <property type="molecule type" value="Genomic_DNA"/>
</dbReference>
<dbReference type="SMR" id="C5D8R6"/>
<dbReference type="STRING" id="471223.GWCH70_1063"/>
<dbReference type="KEGG" id="gwc:GWCH70_1063"/>
<dbReference type="eggNOG" id="COG0223">
    <property type="taxonomic scope" value="Bacteria"/>
</dbReference>
<dbReference type="HOGENOM" id="CLU_033347_1_1_9"/>
<dbReference type="OrthoDB" id="9802815at2"/>
<dbReference type="GO" id="GO:0005829">
    <property type="term" value="C:cytosol"/>
    <property type="evidence" value="ECO:0007669"/>
    <property type="project" value="TreeGrafter"/>
</dbReference>
<dbReference type="GO" id="GO:0004479">
    <property type="term" value="F:methionyl-tRNA formyltransferase activity"/>
    <property type="evidence" value="ECO:0007669"/>
    <property type="project" value="UniProtKB-UniRule"/>
</dbReference>
<dbReference type="CDD" id="cd08646">
    <property type="entry name" value="FMT_core_Met-tRNA-FMT_N"/>
    <property type="match status" value="1"/>
</dbReference>
<dbReference type="CDD" id="cd08704">
    <property type="entry name" value="Met_tRNA_FMT_C"/>
    <property type="match status" value="1"/>
</dbReference>
<dbReference type="FunFam" id="3.40.50.170:FF:000004">
    <property type="entry name" value="Methionyl-tRNA formyltransferase"/>
    <property type="match status" value="1"/>
</dbReference>
<dbReference type="Gene3D" id="3.10.25.10">
    <property type="entry name" value="Formyl transferase, C-terminal domain"/>
    <property type="match status" value="1"/>
</dbReference>
<dbReference type="Gene3D" id="3.40.50.170">
    <property type="entry name" value="Formyl transferase, N-terminal domain"/>
    <property type="match status" value="1"/>
</dbReference>
<dbReference type="HAMAP" id="MF_00182">
    <property type="entry name" value="Formyl_trans"/>
    <property type="match status" value="1"/>
</dbReference>
<dbReference type="InterPro" id="IPR005794">
    <property type="entry name" value="Fmt"/>
</dbReference>
<dbReference type="InterPro" id="IPR005793">
    <property type="entry name" value="Formyl_trans_C"/>
</dbReference>
<dbReference type="InterPro" id="IPR037022">
    <property type="entry name" value="Formyl_trans_C_sf"/>
</dbReference>
<dbReference type="InterPro" id="IPR002376">
    <property type="entry name" value="Formyl_transf_N"/>
</dbReference>
<dbReference type="InterPro" id="IPR036477">
    <property type="entry name" value="Formyl_transf_N_sf"/>
</dbReference>
<dbReference type="InterPro" id="IPR011034">
    <property type="entry name" value="Formyl_transferase-like_C_sf"/>
</dbReference>
<dbReference type="InterPro" id="IPR001555">
    <property type="entry name" value="GART_AS"/>
</dbReference>
<dbReference type="InterPro" id="IPR044135">
    <property type="entry name" value="Met-tRNA-FMT_C"/>
</dbReference>
<dbReference type="InterPro" id="IPR041711">
    <property type="entry name" value="Met-tRNA-FMT_N"/>
</dbReference>
<dbReference type="NCBIfam" id="TIGR00460">
    <property type="entry name" value="fmt"/>
    <property type="match status" value="1"/>
</dbReference>
<dbReference type="PANTHER" id="PTHR11138">
    <property type="entry name" value="METHIONYL-TRNA FORMYLTRANSFERASE"/>
    <property type="match status" value="1"/>
</dbReference>
<dbReference type="PANTHER" id="PTHR11138:SF5">
    <property type="entry name" value="METHIONYL-TRNA FORMYLTRANSFERASE, MITOCHONDRIAL"/>
    <property type="match status" value="1"/>
</dbReference>
<dbReference type="Pfam" id="PF02911">
    <property type="entry name" value="Formyl_trans_C"/>
    <property type="match status" value="1"/>
</dbReference>
<dbReference type="Pfam" id="PF00551">
    <property type="entry name" value="Formyl_trans_N"/>
    <property type="match status" value="1"/>
</dbReference>
<dbReference type="SUPFAM" id="SSF50486">
    <property type="entry name" value="FMT C-terminal domain-like"/>
    <property type="match status" value="1"/>
</dbReference>
<dbReference type="SUPFAM" id="SSF53328">
    <property type="entry name" value="Formyltransferase"/>
    <property type="match status" value="1"/>
</dbReference>
<dbReference type="PROSITE" id="PS00373">
    <property type="entry name" value="GART"/>
    <property type="match status" value="1"/>
</dbReference>
<feature type="chain" id="PRO_1000203861" description="Methionyl-tRNA formyltransferase">
    <location>
        <begin position="1"/>
        <end position="318"/>
    </location>
</feature>
<feature type="binding site" evidence="1">
    <location>
        <begin position="110"/>
        <end position="113"/>
    </location>
    <ligand>
        <name>(6S)-5,6,7,8-tetrahydrofolate</name>
        <dbReference type="ChEBI" id="CHEBI:57453"/>
    </ligand>
</feature>
<reference key="1">
    <citation type="submission" date="2009-06" db="EMBL/GenBank/DDBJ databases">
        <title>Complete sequence of chromosome of Geopacillus sp. WCH70.</title>
        <authorList>
            <consortium name="US DOE Joint Genome Institute"/>
            <person name="Lucas S."/>
            <person name="Copeland A."/>
            <person name="Lapidus A."/>
            <person name="Glavina del Rio T."/>
            <person name="Dalin E."/>
            <person name="Tice H."/>
            <person name="Bruce D."/>
            <person name="Goodwin L."/>
            <person name="Pitluck S."/>
            <person name="Chertkov O."/>
            <person name="Brettin T."/>
            <person name="Detter J.C."/>
            <person name="Han C."/>
            <person name="Larimer F."/>
            <person name="Land M."/>
            <person name="Hauser L."/>
            <person name="Kyrpides N."/>
            <person name="Mikhailova N."/>
            <person name="Brumm P."/>
            <person name="Mead D.A."/>
            <person name="Richardson P."/>
        </authorList>
    </citation>
    <scope>NUCLEOTIDE SEQUENCE [LARGE SCALE GENOMIC DNA]</scope>
    <source>
        <strain>WCH70</strain>
    </source>
</reference>
<accession>C5D8R6</accession>
<organism>
    <name type="scientific">Geobacillus sp. (strain WCH70)</name>
    <dbReference type="NCBI Taxonomy" id="471223"/>
    <lineage>
        <taxon>Bacteria</taxon>
        <taxon>Bacillati</taxon>
        <taxon>Bacillota</taxon>
        <taxon>Bacilli</taxon>
        <taxon>Bacillales</taxon>
        <taxon>Anoxybacillaceae</taxon>
        <taxon>Geobacillus</taxon>
    </lineage>
</organism>
<evidence type="ECO:0000255" key="1">
    <source>
        <dbReference type="HAMAP-Rule" id="MF_00182"/>
    </source>
</evidence>
<keyword id="KW-0648">Protein biosynthesis</keyword>
<keyword id="KW-0808">Transferase</keyword>
<proteinExistence type="inferred from homology"/>
<protein>
    <recommendedName>
        <fullName evidence="1">Methionyl-tRNA formyltransferase</fullName>
        <ecNumber evidence="1">2.1.2.9</ecNumber>
    </recommendedName>
</protein>
<name>FMT_GEOSW</name>